<protein>
    <recommendedName>
        <fullName>mRNA export factor</fullName>
    </recommendedName>
    <alternativeName>
        <fullName>Rae1 protein homolog</fullName>
    </alternativeName>
    <alternativeName>
        <fullName>mRNA-associated protein mrnp 41</fullName>
    </alternativeName>
</protein>
<proteinExistence type="evidence at transcript level"/>
<evidence type="ECO:0000250" key="1">
    <source>
        <dbReference type="UniProtKB" id="P78406"/>
    </source>
</evidence>
<evidence type="ECO:0000256" key="2">
    <source>
        <dbReference type="SAM" id="MobiDB-lite"/>
    </source>
</evidence>
<evidence type="ECO:0000305" key="3"/>
<feature type="chain" id="PRO_0000237585" description="mRNA export factor">
    <location>
        <begin position="1"/>
        <end position="368"/>
    </location>
</feature>
<feature type="repeat" description="WD 1">
    <location>
        <begin position="37"/>
        <end position="79"/>
    </location>
</feature>
<feature type="repeat" description="WD 2">
    <location>
        <begin position="84"/>
        <end position="114"/>
    </location>
</feature>
<feature type="repeat" description="WD 3">
    <location>
        <begin position="125"/>
        <end position="157"/>
    </location>
</feature>
<feature type="repeat" description="WD 4">
    <location>
        <begin position="168"/>
        <end position="206"/>
    </location>
</feature>
<feature type="repeat" description="WD 5">
    <location>
        <begin position="215"/>
        <end position="255"/>
    </location>
</feature>
<feature type="repeat" description="WD 6">
    <location>
        <begin position="271"/>
        <end position="301"/>
    </location>
</feature>
<feature type="repeat" description="WD 7">
    <location>
        <begin position="310"/>
        <end position="346"/>
    </location>
</feature>
<feature type="region of interest" description="Disordered" evidence="2">
    <location>
        <begin position="15"/>
        <end position="34"/>
    </location>
</feature>
<feature type="modified residue" description="Phosphothreonine" evidence="1">
    <location>
        <position position="229"/>
    </location>
</feature>
<sequence>MSLFGTTSGFGSGGTSMFGSTTTDNHNPMKDIEVTSSPDDSIGCLSFSPPTLPGNFLIAGSWANDVRCWEVQDSGQTIPKAQQMHTGPVLDVCWSDDGSKVFTASCDKTAKMWDLNSNQAIQIAQHDAPVKTVHWIKAPNYSCVMTGSWDKTLKFWDTRSSNPMMVLQLPERCYCADVIYPMAVVATAERGLIVYQLENQPSEFRRIESPLKHQHRCVAIFKDKQNKPTGFALGSIEGRVAIHYINPPNPAKDNFTFKCHRSNGTNTSAPQDIYAVNGIAFHPVHGTLATVGSDGRFSFWDKDARTKLKTSEQLDQPISACCFNHNGNIFAYASSYDWSKGHEFYNPQKKNYIFLRNAAEELKPRNKK</sequence>
<dbReference type="EMBL" id="BT021016">
    <property type="protein sequence ID" value="AAX09033.1"/>
    <property type="molecule type" value="mRNA"/>
</dbReference>
<dbReference type="EMBL" id="BC111248">
    <property type="protein sequence ID" value="AAI11249.1"/>
    <property type="molecule type" value="mRNA"/>
</dbReference>
<dbReference type="RefSeq" id="NP_001015585.1">
    <property type="nucleotide sequence ID" value="NM_001015585.1"/>
</dbReference>
<dbReference type="RefSeq" id="XP_024856301.1">
    <property type="nucleotide sequence ID" value="XM_025000533.2"/>
</dbReference>
<dbReference type="RefSeq" id="XP_059748535.1">
    <property type="nucleotide sequence ID" value="XM_059892552.1"/>
</dbReference>
<dbReference type="SMR" id="Q5E9A4"/>
<dbReference type="FunCoup" id="Q5E9A4">
    <property type="interactions" value="5355"/>
</dbReference>
<dbReference type="STRING" id="9913.ENSBTAP00000014523"/>
<dbReference type="PaxDb" id="9913-ENSBTAP00000014523"/>
<dbReference type="Ensembl" id="ENSBTAT00000014523.5">
    <property type="protein sequence ID" value="ENSBTAP00000014523.3"/>
    <property type="gene ID" value="ENSBTAG00000010934.5"/>
</dbReference>
<dbReference type="GeneID" id="513080"/>
<dbReference type="KEGG" id="bta:513080"/>
<dbReference type="CTD" id="8480"/>
<dbReference type="VEuPathDB" id="HostDB:ENSBTAG00000010934"/>
<dbReference type="VGNC" id="VGNC:33692">
    <property type="gene designation" value="RAE1"/>
</dbReference>
<dbReference type="eggNOG" id="KOG0647">
    <property type="taxonomic scope" value="Eukaryota"/>
</dbReference>
<dbReference type="GeneTree" id="ENSGT00950000183091"/>
<dbReference type="HOGENOM" id="CLU_038526_1_0_1"/>
<dbReference type="InParanoid" id="Q5E9A4"/>
<dbReference type="OMA" id="EAMDQSI"/>
<dbReference type="OrthoDB" id="256303at2759"/>
<dbReference type="TreeFam" id="TF105481"/>
<dbReference type="Reactome" id="R-BTA-159227">
    <property type="pathway name" value="Transport of the SLBP independent Mature mRNA"/>
</dbReference>
<dbReference type="Reactome" id="R-BTA-159230">
    <property type="pathway name" value="Transport of the SLBP Dependant Mature mRNA"/>
</dbReference>
<dbReference type="Reactome" id="R-BTA-159231">
    <property type="pathway name" value="Transport of Mature mRNA Derived from an Intronless Transcript"/>
</dbReference>
<dbReference type="Reactome" id="R-BTA-159236">
    <property type="pathway name" value="Transport of Mature mRNA derived from an Intron-Containing Transcript"/>
</dbReference>
<dbReference type="Reactome" id="R-BTA-191859">
    <property type="pathway name" value="snRNP Assembly"/>
</dbReference>
<dbReference type="Reactome" id="R-BTA-3108214">
    <property type="pathway name" value="SUMOylation of DNA damage response and repair proteins"/>
</dbReference>
<dbReference type="Reactome" id="R-BTA-3232142">
    <property type="pathway name" value="SUMOylation of ubiquitinylation proteins"/>
</dbReference>
<dbReference type="Reactome" id="R-BTA-3301854">
    <property type="pathway name" value="Nuclear Pore Complex (NPC) Disassembly"/>
</dbReference>
<dbReference type="Reactome" id="R-BTA-3371453">
    <property type="pathway name" value="Regulation of HSF1-mediated heat shock response"/>
</dbReference>
<dbReference type="Reactome" id="R-BTA-4085377">
    <property type="pathway name" value="SUMOylation of SUMOylation proteins"/>
</dbReference>
<dbReference type="Reactome" id="R-BTA-4551638">
    <property type="pathway name" value="SUMOylation of chromatin organization proteins"/>
</dbReference>
<dbReference type="Reactome" id="R-BTA-4570464">
    <property type="pathway name" value="SUMOylation of RNA binding proteins"/>
</dbReference>
<dbReference type="Reactome" id="R-BTA-4615885">
    <property type="pathway name" value="SUMOylation of DNA replication proteins"/>
</dbReference>
<dbReference type="Reactome" id="R-BTA-5578749">
    <property type="pathway name" value="Transcriptional regulation by small RNAs"/>
</dbReference>
<dbReference type="Proteomes" id="UP000009136">
    <property type="component" value="Chromosome 13"/>
</dbReference>
<dbReference type="Bgee" id="ENSBTAG00000010934">
    <property type="expression patterns" value="Expressed in oocyte and 106 other cell types or tissues"/>
</dbReference>
<dbReference type="GO" id="GO:0005737">
    <property type="term" value="C:cytoplasm"/>
    <property type="evidence" value="ECO:0007669"/>
    <property type="project" value="UniProtKB-SubCell"/>
</dbReference>
<dbReference type="GO" id="GO:0001650">
    <property type="term" value="C:fibrillar center"/>
    <property type="evidence" value="ECO:0007669"/>
    <property type="project" value="Ensembl"/>
</dbReference>
<dbReference type="GO" id="GO:0097431">
    <property type="term" value="C:mitotic spindle pole"/>
    <property type="evidence" value="ECO:0000250"/>
    <property type="project" value="UniProtKB"/>
</dbReference>
<dbReference type="GO" id="GO:0005643">
    <property type="term" value="C:nuclear pore"/>
    <property type="evidence" value="ECO:0000318"/>
    <property type="project" value="GO_Central"/>
</dbReference>
<dbReference type="GO" id="GO:0005654">
    <property type="term" value="C:nucleoplasm"/>
    <property type="evidence" value="ECO:0007669"/>
    <property type="project" value="Ensembl"/>
</dbReference>
<dbReference type="GO" id="GO:0003723">
    <property type="term" value="F:RNA binding"/>
    <property type="evidence" value="ECO:0000318"/>
    <property type="project" value="GO_Central"/>
</dbReference>
<dbReference type="GO" id="GO:0043130">
    <property type="term" value="F:ubiquitin binding"/>
    <property type="evidence" value="ECO:0000318"/>
    <property type="project" value="GO_Central"/>
</dbReference>
<dbReference type="GO" id="GO:0051301">
    <property type="term" value="P:cell division"/>
    <property type="evidence" value="ECO:0007669"/>
    <property type="project" value="UniProtKB-KW"/>
</dbReference>
<dbReference type="GO" id="GO:0060236">
    <property type="term" value="P:regulation of mitotic spindle organization"/>
    <property type="evidence" value="ECO:0000250"/>
    <property type="project" value="UniProtKB"/>
</dbReference>
<dbReference type="GO" id="GO:0006405">
    <property type="term" value="P:RNA export from nucleus"/>
    <property type="evidence" value="ECO:0000318"/>
    <property type="project" value="GO_Central"/>
</dbReference>
<dbReference type="GO" id="GO:0000972">
    <property type="term" value="P:transcription-dependent tethering of RNA polymerase II gene DNA at nuclear periphery"/>
    <property type="evidence" value="ECO:0000318"/>
    <property type="project" value="GO_Central"/>
</dbReference>
<dbReference type="FunFam" id="2.130.10.10:FF:000084">
    <property type="entry name" value="mRNA export factor"/>
    <property type="match status" value="1"/>
</dbReference>
<dbReference type="Gene3D" id="2.130.10.10">
    <property type="entry name" value="YVTN repeat-like/Quinoprotein amine dehydrogenase"/>
    <property type="match status" value="1"/>
</dbReference>
<dbReference type="InterPro" id="IPR020472">
    <property type="entry name" value="G-protein_beta_WD-40_rep"/>
</dbReference>
<dbReference type="InterPro" id="IPR015943">
    <property type="entry name" value="WD40/YVTN_repeat-like_dom_sf"/>
</dbReference>
<dbReference type="InterPro" id="IPR019775">
    <property type="entry name" value="WD40_repeat_CS"/>
</dbReference>
<dbReference type="InterPro" id="IPR036322">
    <property type="entry name" value="WD40_repeat_dom_sf"/>
</dbReference>
<dbReference type="InterPro" id="IPR001680">
    <property type="entry name" value="WD40_rpt"/>
</dbReference>
<dbReference type="PANTHER" id="PTHR10971">
    <property type="entry name" value="MRNA EXPORT FACTOR AND BUB3"/>
    <property type="match status" value="1"/>
</dbReference>
<dbReference type="Pfam" id="PF00400">
    <property type="entry name" value="WD40"/>
    <property type="match status" value="3"/>
</dbReference>
<dbReference type="PRINTS" id="PR00320">
    <property type="entry name" value="GPROTEINBRPT"/>
</dbReference>
<dbReference type="SMART" id="SM00320">
    <property type="entry name" value="WD40"/>
    <property type="match status" value="4"/>
</dbReference>
<dbReference type="SUPFAM" id="SSF50978">
    <property type="entry name" value="WD40 repeat-like"/>
    <property type="match status" value="1"/>
</dbReference>
<dbReference type="PROSITE" id="PS00678">
    <property type="entry name" value="WD_REPEATS_1"/>
    <property type="match status" value="2"/>
</dbReference>
<dbReference type="PROSITE" id="PS50082">
    <property type="entry name" value="WD_REPEATS_2"/>
    <property type="match status" value="3"/>
</dbReference>
<dbReference type="PROSITE" id="PS50294">
    <property type="entry name" value="WD_REPEATS_REGION"/>
    <property type="match status" value="1"/>
</dbReference>
<keyword id="KW-0131">Cell cycle</keyword>
<keyword id="KW-0132">Cell division</keyword>
<keyword id="KW-0963">Cytoplasm</keyword>
<keyword id="KW-0206">Cytoskeleton</keyword>
<keyword id="KW-0498">Mitosis</keyword>
<keyword id="KW-0539">Nucleus</keyword>
<keyword id="KW-0597">Phosphoprotein</keyword>
<keyword id="KW-1185">Reference proteome</keyword>
<keyword id="KW-0677">Repeat</keyword>
<keyword id="KW-0813">Transport</keyword>
<keyword id="KW-0853">WD repeat</keyword>
<gene>
    <name type="primary">RAE1</name>
    <name type="synonym">MRNP41</name>
</gene>
<comment type="function">
    <text evidence="1">Plays a role in mitotic bipolar spindle formation. Binds mRNA. May function in nucleocytoplasmic transport and in directly or indirectly attaching cytoplasmic mRNPs to the cytoskeleton.</text>
</comment>
<comment type="subunit">
    <text evidence="1">Interacts with NUMA1 (via N-terminal end of the coiled-coil domain); this interaction promotes spindle formation in mitosis (By similarity). Interacts with NUP98 (By similarity). Interacts with MYCBP2 (By similarity). Interacts with USP11 (By similarity).</text>
</comment>
<comment type="subcellular location">
    <subcellularLocation>
        <location evidence="1">Cytoplasm</location>
    </subcellularLocation>
    <subcellularLocation>
        <location evidence="1">Nucleus</location>
    </subcellularLocation>
    <subcellularLocation>
        <location evidence="1">Cytoplasm</location>
        <location evidence="1">Cytoskeleton</location>
        <location evidence="1">Spindle pole</location>
    </subcellularLocation>
    <text evidence="1">Recruited from interphase nuclei to spindle MTs during mitosis.</text>
</comment>
<comment type="similarity">
    <text evidence="3">Belongs to the WD repeat rae1 family.</text>
</comment>
<name>RAE1L_BOVIN</name>
<reference key="1">
    <citation type="journal article" date="2005" name="BMC Genomics">
        <title>Characterization of 954 bovine full-CDS cDNA sequences.</title>
        <authorList>
            <person name="Harhay G.P."/>
            <person name="Sonstegard T.S."/>
            <person name="Keele J.W."/>
            <person name="Heaton M.P."/>
            <person name="Clawson M.L."/>
            <person name="Snelling W.M."/>
            <person name="Wiedmann R.T."/>
            <person name="Van Tassell C.P."/>
            <person name="Smith T.P.L."/>
        </authorList>
    </citation>
    <scope>NUCLEOTIDE SEQUENCE [LARGE SCALE MRNA]</scope>
</reference>
<reference key="2">
    <citation type="submission" date="2005-12" db="EMBL/GenBank/DDBJ databases">
        <authorList>
            <consortium name="NIH - Mammalian Gene Collection (MGC) project"/>
        </authorList>
    </citation>
    <scope>NUCLEOTIDE SEQUENCE [LARGE SCALE MRNA]</scope>
    <source>
        <strain>Crossbred X Angus</strain>
        <tissue>Liver</tissue>
    </source>
</reference>
<accession>Q5E9A4</accession>
<organism>
    <name type="scientific">Bos taurus</name>
    <name type="common">Bovine</name>
    <dbReference type="NCBI Taxonomy" id="9913"/>
    <lineage>
        <taxon>Eukaryota</taxon>
        <taxon>Metazoa</taxon>
        <taxon>Chordata</taxon>
        <taxon>Craniata</taxon>
        <taxon>Vertebrata</taxon>
        <taxon>Euteleostomi</taxon>
        <taxon>Mammalia</taxon>
        <taxon>Eutheria</taxon>
        <taxon>Laurasiatheria</taxon>
        <taxon>Artiodactyla</taxon>
        <taxon>Ruminantia</taxon>
        <taxon>Pecora</taxon>
        <taxon>Bovidae</taxon>
        <taxon>Bovinae</taxon>
        <taxon>Bos</taxon>
    </lineage>
</organism>